<name>RL36_METEP</name>
<dbReference type="EMBL" id="CP000908">
    <property type="protein sequence ID" value="ABY31132.1"/>
    <property type="molecule type" value="Genomic_DNA"/>
</dbReference>
<dbReference type="SMR" id="A9W6C6"/>
<dbReference type="KEGG" id="mex:Mext_2741"/>
<dbReference type="eggNOG" id="COG0257">
    <property type="taxonomic scope" value="Bacteria"/>
</dbReference>
<dbReference type="HOGENOM" id="CLU_135723_3_2_5"/>
<dbReference type="BioCyc" id="MEXT419610:MEXT_RS13820-MONOMER"/>
<dbReference type="GO" id="GO:1990904">
    <property type="term" value="C:ribonucleoprotein complex"/>
    <property type="evidence" value="ECO:0007669"/>
    <property type="project" value="UniProtKB-KW"/>
</dbReference>
<dbReference type="GO" id="GO:0005840">
    <property type="term" value="C:ribosome"/>
    <property type="evidence" value="ECO:0007669"/>
    <property type="project" value="UniProtKB-KW"/>
</dbReference>
<dbReference type="GO" id="GO:0003735">
    <property type="term" value="F:structural constituent of ribosome"/>
    <property type="evidence" value="ECO:0007669"/>
    <property type="project" value="InterPro"/>
</dbReference>
<dbReference type="GO" id="GO:0006412">
    <property type="term" value="P:translation"/>
    <property type="evidence" value="ECO:0007669"/>
    <property type="project" value="UniProtKB-UniRule"/>
</dbReference>
<dbReference type="HAMAP" id="MF_00251">
    <property type="entry name" value="Ribosomal_bL36"/>
    <property type="match status" value="1"/>
</dbReference>
<dbReference type="InterPro" id="IPR000473">
    <property type="entry name" value="Ribosomal_bL36"/>
</dbReference>
<dbReference type="InterPro" id="IPR035977">
    <property type="entry name" value="Ribosomal_bL36_sp"/>
</dbReference>
<dbReference type="InterPro" id="IPR047621">
    <property type="entry name" value="Ribosomal_L36_bact"/>
</dbReference>
<dbReference type="NCBIfam" id="NF002021">
    <property type="entry name" value="PRK00831.1"/>
    <property type="match status" value="1"/>
</dbReference>
<dbReference type="NCBIfam" id="TIGR01022">
    <property type="entry name" value="rpmJ_bact"/>
    <property type="match status" value="1"/>
</dbReference>
<dbReference type="PANTHER" id="PTHR47781">
    <property type="entry name" value="50S RIBOSOMAL PROTEIN L36 2"/>
    <property type="match status" value="1"/>
</dbReference>
<dbReference type="PANTHER" id="PTHR47781:SF1">
    <property type="entry name" value="LARGE RIBOSOMAL SUBUNIT PROTEIN BL36B"/>
    <property type="match status" value="1"/>
</dbReference>
<dbReference type="Pfam" id="PF00444">
    <property type="entry name" value="Ribosomal_L36"/>
    <property type="match status" value="1"/>
</dbReference>
<dbReference type="SUPFAM" id="SSF57840">
    <property type="entry name" value="Ribosomal protein L36"/>
    <property type="match status" value="1"/>
</dbReference>
<dbReference type="PROSITE" id="PS00828">
    <property type="entry name" value="RIBOSOMAL_L36"/>
    <property type="match status" value="1"/>
</dbReference>
<evidence type="ECO:0000255" key="1">
    <source>
        <dbReference type="HAMAP-Rule" id="MF_00251"/>
    </source>
</evidence>
<evidence type="ECO:0000305" key="2"/>
<sequence length="41" mass="4994">MKIRNSLKSLRGRHRDNQLVRRKGRVYVINKTQKRFKARQG</sequence>
<comment type="similarity">
    <text evidence="1">Belongs to the bacterial ribosomal protein bL36 family.</text>
</comment>
<proteinExistence type="inferred from homology"/>
<feature type="chain" id="PRO_1000101040" description="Large ribosomal subunit protein bL36">
    <location>
        <begin position="1"/>
        <end position="41"/>
    </location>
</feature>
<accession>A9W6C6</accession>
<keyword id="KW-0687">Ribonucleoprotein</keyword>
<keyword id="KW-0689">Ribosomal protein</keyword>
<gene>
    <name evidence="1" type="primary">rpmJ</name>
    <name type="ordered locus">Mext_2741</name>
</gene>
<organism>
    <name type="scientific">Methylorubrum extorquens (strain PA1)</name>
    <name type="common">Methylobacterium extorquens</name>
    <dbReference type="NCBI Taxonomy" id="419610"/>
    <lineage>
        <taxon>Bacteria</taxon>
        <taxon>Pseudomonadati</taxon>
        <taxon>Pseudomonadota</taxon>
        <taxon>Alphaproteobacteria</taxon>
        <taxon>Hyphomicrobiales</taxon>
        <taxon>Methylobacteriaceae</taxon>
        <taxon>Methylorubrum</taxon>
    </lineage>
</organism>
<reference key="1">
    <citation type="submission" date="2007-12" db="EMBL/GenBank/DDBJ databases">
        <title>Complete sequence of Methylobacterium extorquens PA1.</title>
        <authorList>
            <consortium name="US DOE Joint Genome Institute"/>
            <person name="Copeland A."/>
            <person name="Lucas S."/>
            <person name="Lapidus A."/>
            <person name="Barry K."/>
            <person name="Glavina del Rio T."/>
            <person name="Dalin E."/>
            <person name="Tice H."/>
            <person name="Pitluck S."/>
            <person name="Saunders E."/>
            <person name="Brettin T."/>
            <person name="Bruce D."/>
            <person name="Detter J.C."/>
            <person name="Han C."/>
            <person name="Schmutz J."/>
            <person name="Larimer F."/>
            <person name="Land M."/>
            <person name="Hauser L."/>
            <person name="Kyrpides N."/>
            <person name="Kim E."/>
            <person name="Marx C."/>
            <person name="Richardson P."/>
        </authorList>
    </citation>
    <scope>NUCLEOTIDE SEQUENCE [LARGE SCALE GENOMIC DNA]</scope>
    <source>
        <strain>PA1</strain>
    </source>
</reference>
<protein>
    <recommendedName>
        <fullName evidence="1">Large ribosomal subunit protein bL36</fullName>
    </recommendedName>
    <alternativeName>
        <fullName evidence="2">50S ribosomal protein L36</fullName>
    </alternativeName>
</protein>